<protein>
    <recommendedName>
        <fullName evidence="1">Phosphoribosyl-dephospho-CoA transferase</fullName>
        <ecNumber evidence="1">2.7.7.66</ecNumber>
    </recommendedName>
    <alternativeName>
        <fullName evidence="1">Malonate decarboxylase holo-[acyl-carrier-protein] synthase</fullName>
        <shortName evidence="1">Holo-ACP synthase</shortName>
    </alternativeName>
</protein>
<reference key="1">
    <citation type="journal article" date="2002" name="DNA Res.">
        <title>Complete genomic sequence of nitrogen-fixing symbiotic bacterium Bradyrhizobium japonicum USDA110.</title>
        <authorList>
            <person name="Kaneko T."/>
            <person name="Nakamura Y."/>
            <person name="Sato S."/>
            <person name="Minamisawa K."/>
            <person name="Uchiumi T."/>
            <person name="Sasamoto S."/>
            <person name="Watanabe A."/>
            <person name="Idesawa K."/>
            <person name="Iriguchi M."/>
            <person name="Kawashima K."/>
            <person name="Kohara M."/>
            <person name="Matsumoto M."/>
            <person name="Shimpo S."/>
            <person name="Tsuruoka H."/>
            <person name="Wada T."/>
            <person name="Yamada M."/>
            <person name="Tabata S."/>
        </authorList>
    </citation>
    <scope>NUCLEOTIDE SEQUENCE [LARGE SCALE GENOMIC DNA]</scope>
    <source>
        <strain>JCM 10833 / BCRC 13528 / IAM 13628 / NBRC 14792 / USDA 110</strain>
    </source>
</reference>
<name>MDCG_BRADU</name>
<dbReference type="EC" id="2.7.7.66" evidence="1"/>
<dbReference type="EMBL" id="BA000040">
    <property type="protein sequence ID" value="BAC45531.1"/>
    <property type="molecule type" value="Genomic_DNA"/>
</dbReference>
<dbReference type="RefSeq" id="NP_766906.1">
    <property type="nucleotide sequence ID" value="NC_004463.1"/>
</dbReference>
<dbReference type="RefSeq" id="WP_011083098.1">
    <property type="nucleotide sequence ID" value="NC_004463.1"/>
</dbReference>
<dbReference type="STRING" id="224911.AAV28_40575"/>
<dbReference type="EnsemblBacteria" id="BAC45531">
    <property type="protein sequence ID" value="BAC45531"/>
    <property type="gene ID" value="BAC45531"/>
</dbReference>
<dbReference type="GeneID" id="46495417"/>
<dbReference type="KEGG" id="bja:bll0266"/>
<dbReference type="PATRIC" id="fig|224911.44.peg.8787"/>
<dbReference type="eggNOG" id="ENOG503268I">
    <property type="taxonomic scope" value="Bacteria"/>
</dbReference>
<dbReference type="HOGENOM" id="CLU_075747_0_1_5"/>
<dbReference type="InParanoid" id="Q89XP2"/>
<dbReference type="OrthoDB" id="5498803at2"/>
<dbReference type="Proteomes" id="UP000002526">
    <property type="component" value="Chromosome"/>
</dbReference>
<dbReference type="GO" id="GO:0016779">
    <property type="term" value="F:nucleotidyltransferase activity"/>
    <property type="evidence" value="ECO:0007669"/>
    <property type="project" value="UniProtKB-UniRule"/>
</dbReference>
<dbReference type="HAMAP" id="MF_00650">
    <property type="entry name" value="Malonate_MdcG"/>
    <property type="match status" value="1"/>
</dbReference>
<dbReference type="InterPro" id="IPR017557">
    <property type="entry name" value="Holo-ACP_synthase"/>
</dbReference>
<dbReference type="InterPro" id="IPR049180">
    <property type="entry name" value="MdcG_C"/>
</dbReference>
<dbReference type="InterPro" id="IPR048903">
    <property type="entry name" value="MdcG_N"/>
</dbReference>
<dbReference type="NCBIfam" id="TIGR03135">
    <property type="entry name" value="malonate_mdcG"/>
    <property type="match status" value="1"/>
</dbReference>
<dbReference type="Pfam" id="PF10620">
    <property type="entry name" value="MdcG"/>
    <property type="match status" value="1"/>
</dbReference>
<dbReference type="Pfam" id="PF20866">
    <property type="entry name" value="MdcG_N"/>
    <property type="match status" value="1"/>
</dbReference>
<keyword id="KW-0548">Nucleotidyltransferase</keyword>
<keyword id="KW-1185">Reference proteome</keyword>
<keyword id="KW-0808">Transferase</keyword>
<sequence length="226" mass="24857">MTSPCKHGDRPPGRHDLVFVSPAGWRAMLDARDDLAADSLLARWPKMRWPTIRRRALPHEATGVALGLPLPPSAGKKRVALLVEIDHVASVARPPSLQQARAYAPRNWWPTLDRLDGLALRHSVDARVYGSLAWQSLTGLDYVTGRSDLDVLFEFRSETDIDRFVADVAAIETSAPMRLDGELMSADGAAVNWREVHGGASELLVKSIERVVLLDRHQFISGATGS</sequence>
<feature type="chain" id="PRO_0000220292" description="Phosphoribosyl-dephospho-CoA transferase">
    <location>
        <begin position="1"/>
        <end position="226"/>
    </location>
</feature>
<feature type="active site" evidence="1">
    <location>
        <position position="148"/>
    </location>
</feature>
<feature type="active site" evidence="1">
    <location>
        <position position="150"/>
    </location>
</feature>
<evidence type="ECO:0000255" key="1">
    <source>
        <dbReference type="HAMAP-Rule" id="MF_00650"/>
    </source>
</evidence>
<organism>
    <name type="scientific">Bradyrhizobium diazoefficiens (strain JCM 10833 / BCRC 13528 / IAM 13628 / NBRC 14792 / USDA 110)</name>
    <dbReference type="NCBI Taxonomy" id="224911"/>
    <lineage>
        <taxon>Bacteria</taxon>
        <taxon>Pseudomonadati</taxon>
        <taxon>Pseudomonadota</taxon>
        <taxon>Alphaproteobacteria</taxon>
        <taxon>Hyphomicrobiales</taxon>
        <taxon>Nitrobacteraceae</taxon>
        <taxon>Bradyrhizobium</taxon>
    </lineage>
</organism>
<proteinExistence type="inferred from homology"/>
<accession>Q89XP2</accession>
<gene>
    <name evidence="1" type="primary">mdcG</name>
    <name type="ordered locus">bll0266</name>
</gene>
<comment type="function">
    <text evidence="1">Transfers 2'-(5-triphosphoribosyl)-3'-dephosphocoenzyme-A to the apo-[acyl-carrier-protein] of the malonate decarboxylase to yield holo-[acyl-carrier-protein].</text>
</comment>
<comment type="catalytic activity">
    <reaction evidence="1">
        <text>apo-[malonate decarboxylase ACP] + 2'-(5''-triphospho-alpha-D-ribosyl)-3'-dephospho-CoA = holo-[malonate decarboxylase ACP] + diphosphate</text>
        <dbReference type="Rhea" id="RHEA:42644"/>
        <dbReference type="Rhea" id="RHEA-COMP:10160"/>
        <dbReference type="Rhea" id="RHEA-COMP:10161"/>
        <dbReference type="ChEBI" id="CHEBI:29999"/>
        <dbReference type="ChEBI" id="CHEBI:33019"/>
        <dbReference type="ChEBI" id="CHEBI:61378"/>
        <dbReference type="ChEBI" id="CHEBI:82683"/>
        <dbReference type="EC" id="2.7.7.66"/>
    </reaction>
</comment>
<comment type="similarity">
    <text evidence="1">Belongs to the MdcG family.</text>
</comment>